<keyword id="KW-0002">3D-structure</keyword>
<keyword id="KW-0012">Acyltransferase</keyword>
<keyword id="KW-0025">Alternative splicing</keyword>
<keyword id="KW-0225">Disease variant</keyword>
<keyword id="KW-0350">Heme biosynthesis</keyword>
<keyword id="KW-0472">Membrane</keyword>
<keyword id="KW-0496">Mitochondrion</keyword>
<keyword id="KW-0999">Mitochondrion inner membrane</keyword>
<keyword id="KW-1267">Proteomics identification</keyword>
<keyword id="KW-0663">Pyridoxal phosphate</keyword>
<keyword id="KW-1185">Reference proteome</keyword>
<keyword id="KW-0808">Transferase</keyword>
<keyword id="KW-0809">Transit peptide</keyword>
<accession>P22557</accession>
<accession>A8K3F0</accession>
<accession>A8K6C4</accession>
<accession>Q13735</accession>
<accession>Q5JZF5</accession>
<accession>Q8N6H3</accession>
<proteinExistence type="evidence at protein level"/>
<dbReference type="EC" id="2.3.1.37" evidence="6 12 13 14 15"/>
<dbReference type="EMBL" id="X56352">
    <property type="protein sequence ID" value="CAA39795.1"/>
    <property type="status" value="ALT_INIT"/>
    <property type="molecule type" value="mRNA"/>
</dbReference>
<dbReference type="EMBL" id="X60364">
    <property type="protein sequence ID" value="CAA42916.1"/>
    <property type="molecule type" value="mRNA"/>
</dbReference>
<dbReference type="EMBL" id="AF068624">
    <property type="protein sequence ID" value="AAC39838.1"/>
    <property type="molecule type" value="Genomic_DNA"/>
</dbReference>
<dbReference type="EMBL" id="AK290565">
    <property type="protein sequence ID" value="BAF83254.1"/>
    <property type="molecule type" value="mRNA"/>
</dbReference>
<dbReference type="EMBL" id="AK291589">
    <property type="protein sequence ID" value="BAF84278.1"/>
    <property type="molecule type" value="mRNA"/>
</dbReference>
<dbReference type="EMBL" id="AK313118">
    <property type="protein sequence ID" value="BAG35939.1"/>
    <property type="molecule type" value="mRNA"/>
</dbReference>
<dbReference type="EMBL" id="Z83821">
    <property type="status" value="NOT_ANNOTATED_CDS"/>
    <property type="molecule type" value="Genomic_DNA"/>
</dbReference>
<dbReference type="EMBL" id="AL020991">
    <property type="status" value="NOT_ANNOTATED_CDS"/>
    <property type="molecule type" value="Genomic_DNA"/>
</dbReference>
<dbReference type="EMBL" id="CH471154">
    <property type="protein sequence ID" value="EAW93211.1"/>
    <property type="molecule type" value="Genomic_DNA"/>
</dbReference>
<dbReference type="EMBL" id="CH471154">
    <property type="protein sequence ID" value="EAW93213.1"/>
    <property type="molecule type" value="Genomic_DNA"/>
</dbReference>
<dbReference type="EMBL" id="BC030230">
    <property type="protein sequence ID" value="AAH30230.2"/>
    <property type="molecule type" value="mRNA"/>
</dbReference>
<dbReference type="CCDS" id="CCDS14366.1">
    <molecule id="P22557-1"/>
</dbReference>
<dbReference type="CCDS" id="CCDS35303.1">
    <molecule id="P22557-2"/>
</dbReference>
<dbReference type="CCDS" id="CCDS43960.1">
    <molecule id="P22557-4"/>
</dbReference>
<dbReference type="PIR" id="S16347">
    <property type="entry name" value="SYHUAE"/>
</dbReference>
<dbReference type="RefSeq" id="NP_000023.2">
    <molecule id="P22557-1"/>
    <property type="nucleotide sequence ID" value="NM_000032.5"/>
</dbReference>
<dbReference type="RefSeq" id="NP_001033056.1">
    <molecule id="P22557-2"/>
    <property type="nucleotide sequence ID" value="NM_001037967.4"/>
</dbReference>
<dbReference type="RefSeq" id="NP_001033057.1">
    <molecule id="P22557-4"/>
    <property type="nucleotide sequence ID" value="NM_001037968.4"/>
</dbReference>
<dbReference type="PDB" id="5QQQ">
    <property type="method" value="X-ray"/>
    <property type="resolution" value="1.93 A"/>
    <property type="chains" value="A/B=143-578"/>
</dbReference>
<dbReference type="PDB" id="5QQR">
    <property type="method" value="X-ray"/>
    <property type="resolution" value="1.46 A"/>
    <property type="chains" value="A/B=143-578"/>
</dbReference>
<dbReference type="PDB" id="5QQS">
    <property type="method" value="X-ray"/>
    <property type="resolution" value="1.85 A"/>
    <property type="chains" value="A/B=143-578"/>
</dbReference>
<dbReference type="PDB" id="5QQT">
    <property type="method" value="X-ray"/>
    <property type="resolution" value="1.67 A"/>
    <property type="chains" value="A/B=143-578"/>
</dbReference>
<dbReference type="PDB" id="5QQU">
    <property type="method" value="X-ray"/>
    <property type="resolution" value="1.55 A"/>
    <property type="chains" value="A/B=143-578"/>
</dbReference>
<dbReference type="PDB" id="5QQV">
    <property type="method" value="X-ray"/>
    <property type="resolution" value="1.52 A"/>
    <property type="chains" value="A/B=143-578"/>
</dbReference>
<dbReference type="PDB" id="5QQW">
    <property type="method" value="X-ray"/>
    <property type="resolution" value="1.56 A"/>
    <property type="chains" value="A/B=143-578"/>
</dbReference>
<dbReference type="PDB" id="5QQX">
    <property type="method" value="X-ray"/>
    <property type="resolution" value="1.50 A"/>
    <property type="chains" value="A/B=143-578"/>
</dbReference>
<dbReference type="PDB" id="5QQY">
    <property type="method" value="X-ray"/>
    <property type="resolution" value="1.49 A"/>
    <property type="chains" value="A/B=143-578"/>
</dbReference>
<dbReference type="PDB" id="5QQZ">
    <property type="method" value="X-ray"/>
    <property type="resolution" value="1.55 A"/>
    <property type="chains" value="A/B=143-578"/>
</dbReference>
<dbReference type="PDB" id="5QR0">
    <property type="method" value="X-ray"/>
    <property type="resolution" value="1.65 A"/>
    <property type="chains" value="A/B=143-578"/>
</dbReference>
<dbReference type="PDB" id="5QR1">
    <property type="method" value="X-ray"/>
    <property type="resolution" value="1.44 A"/>
    <property type="chains" value="A/B=143-578"/>
</dbReference>
<dbReference type="PDB" id="5QR2">
    <property type="method" value="X-ray"/>
    <property type="resolution" value="1.66 A"/>
    <property type="chains" value="A/B=143-578"/>
</dbReference>
<dbReference type="PDB" id="5QR3">
    <property type="method" value="X-ray"/>
    <property type="resolution" value="1.71 A"/>
    <property type="chains" value="A/B=143-578"/>
</dbReference>
<dbReference type="PDB" id="5QR4">
    <property type="method" value="X-ray"/>
    <property type="resolution" value="1.57 A"/>
    <property type="chains" value="A/B=143-578"/>
</dbReference>
<dbReference type="PDB" id="5QR5">
    <property type="method" value="X-ray"/>
    <property type="resolution" value="1.49 A"/>
    <property type="chains" value="A/B=143-578"/>
</dbReference>
<dbReference type="PDB" id="5QR6">
    <property type="method" value="X-ray"/>
    <property type="resolution" value="1.52 A"/>
    <property type="chains" value="A/B=143-578"/>
</dbReference>
<dbReference type="PDB" id="5QR7">
    <property type="method" value="X-ray"/>
    <property type="resolution" value="1.74 A"/>
    <property type="chains" value="A/B=143-578"/>
</dbReference>
<dbReference type="PDB" id="5QR8">
    <property type="method" value="X-ray"/>
    <property type="resolution" value="1.85 A"/>
    <property type="chains" value="A/B=143-578"/>
</dbReference>
<dbReference type="PDB" id="5QR9">
    <property type="method" value="X-ray"/>
    <property type="resolution" value="1.62 A"/>
    <property type="chains" value="A/B=143-578"/>
</dbReference>
<dbReference type="PDB" id="5QRA">
    <property type="method" value="X-ray"/>
    <property type="resolution" value="1.72 A"/>
    <property type="chains" value="A/B=143-578"/>
</dbReference>
<dbReference type="PDB" id="5QRB">
    <property type="method" value="X-ray"/>
    <property type="resolution" value="1.72 A"/>
    <property type="chains" value="A/B=143-578"/>
</dbReference>
<dbReference type="PDB" id="5QRC">
    <property type="method" value="X-ray"/>
    <property type="resolution" value="1.82 A"/>
    <property type="chains" value="A/B=143-578"/>
</dbReference>
<dbReference type="PDB" id="5QRD">
    <property type="method" value="X-ray"/>
    <property type="resolution" value="1.76 A"/>
    <property type="chains" value="A/B=143-578"/>
</dbReference>
<dbReference type="PDB" id="5QRE">
    <property type="method" value="X-ray"/>
    <property type="resolution" value="1.67 A"/>
    <property type="chains" value="A/B=143-578"/>
</dbReference>
<dbReference type="PDB" id="5QT3">
    <property type="method" value="X-ray"/>
    <property type="resolution" value="1.95 A"/>
    <property type="chains" value="A/B=143-578"/>
</dbReference>
<dbReference type="PDB" id="6HRH">
    <property type="method" value="X-ray"/>
    <property type="resolution" value="2.30 A"/>
    <property type="chains" value="A/B=143-587"/>
</dbReference>
<dbReference type="PDBsum" id="5QQQ"/>
<dbReference type="PDBsum" id="5QQR"/>
<dbReference type="PDBsum" id="5QQS"/>
<dbReference type="PDBsum" id="5QQT"/>
<dbReference type="PDBsum" id="5QQU"/>
<dbReference type="PDBsum" id="5QQV"/>
<dbReference type="PDBsum" id="5QQW"/>
<dbReference type="PDBsum" id="5QQX"/>
<dbReference type="PDBsum" id="5QQY"/>
<dbReference type="PDBsum" id="5QQZ"/>
<dbReference type="PDBsum" id="5QR0"/>
<dbReference type="PDBsum" id="5QR1"/>
<dbReference type="PDBsum" id="5QR2"/>
<dbReference type="PDBsum" id="5QR3"/>
<dbReference type="PDBsum" id="5QR4"/>
<dbReference type="PDBsum" id="5QR5"/>
<dbReference type="PDBsum" id="5QR6"/>
<dbReference type="PDBsum" id="5QR7"/>
<dbReference type="PDBsum" id="5QR8"/>
<dbReference type="PDBsum" id="5QR9"/>
<dbReference type="PDBsum" id="5QRA"/>
<dbReference type="PDBsum" id="5QRB"/>
<dbReference type="PDBsum" id="5QRC"/>
<dbReference type="PDBsum" id="5QRD"/>
<dbReference type="PDBsum" id="5QRE"/>
<dbReference type="PDBsum" id="5QT3"/>
<dbReference type="PDBsum" id="6HRH"/>
<dbReference type="SMR" id="P22557"/>
<dbReference type="BioGRID" id="106714">
    <property type="interactions" value="5"/>
</dbReference>
<dbReference type="FunCoup" id="P22557">
    <property type="interactions" value="696"/>
</dbReference>
<dbReference type="IntAct" id="P22557">
    <property type="interactions" value="2"/>
</dbReference>
<dbReference type="STRING" id="9606.ENSP00000497236"/>
<dbReference type="BindingDB" id="P22557"/>
<dbReference type="DrugBank" id="DB00145">
    <property type="generic name" value="Glycine"/>
</dbReference>
<dbReference type="DrugBank" id="DB00114">
    <property type="generic name" value="Pyridoxal phosphate"/>
</dbReference>
<dbReference type="iPTMnet" id="P22557"/>
<dbReference type="PhosphoSitePlus" id="P22557"/>
<dbReference type="BioMuta" id="ALAS2"/>
<dbReference type="DMDM" id="20141346"/>
<dbReference type="jPOST" id="P22557"/>
<dbReference type="MassIVE" id="P22557"/>
<dbReference type="PaxDb" id="9606-ENSP00000332369"/>
<dbReference type="PeptideAtlas" id="P22557"/>
<dbReference type="ProteomicsDB" id="54000">
    <molecule id="P22557-1"/>
</dbReference>
<dbReference type="ProteomicsDB" id="54001">
    <molecule id="P22557-2"/>
</dbReference>
<dbReference type="ProteomicsDB" id="54002">
    <molecule id="P22557-3"/>
</dbReference>
<dbReference type="ProteomicsDB" id="63531"/>
<dbReference type="ABCD" id="P22557">
    <property type="antibodies" value="1 sequenced antibody"/>
</dbReference>
<dbReference type="Antibodypedia" id="457">
    <property type="antibodies" value="312 antibodies from 32 providers"/>
</dbReference>
<dbReference type="DNASU" id="212"/>
<dbReference type="Ensembl" id="ENST00000335854.8">
    <molecule id="P22557-2"/>
    <property type="protein sequence ID" value="ENSP00000337131.4"/>
    <property type="gene ID" value="ENSG00000158578.21"/>
</dbReference>
<dbReference type="Ensembl" id="ENST00000396198.7">
    <molecule id="P22557-4"/>
    <property type="protein sequence ID" value="ENSP00000379501.3"/>
    <property type="gene ID" value="ENSG00000158578.21"/>
</dbReference>
<dbReference type="Ensembl" id="ENST00000650242.1">
    <molecule id="P22557-1"/>
    <property type="protein sequence ID" value="ENSP00000497236.1"/>
    <property type="gene ID" value="ENSG00000158578.21"/>
</dbReference>
<dbReference type="GeneID" id="212"/>
<dbReference type="KEGG" id="hsa:212"/>
<dbReference type="MANE-Select" id="ENST00000650242.1">
    <property type="protein sequence ID" value="ENSP00000497236.1"/>
    <property type="RefSeq nucleotide sequence ID" value="NM_000032.5"/>
    <property type="RefSeq protein sequence ID" value="NP_000023.2"/>
</dbReference>
<dbReference type="UCSC" id="uc004dua.4">
    <molecule id="P22557-1"/>
    <property type="organism name" value="human"/>
</dbReference>
<dbReference type="AGR" id="HGNC:397"/>
<dbReference type="CTD" id="212"/>
<dbReference type="DisGeNET" id="212"/>
<dbReference type="GeneCards" id="ALAS2"/>
<dbReference type="GeneReviews" id="ALAS2"/>
<dbReference type="HGNC" id="HGNC:397">
    <property type="gene designation" value="ALAS2"/>
</dbReference>
<dbReference type="HPA" id="ENSG00000158578">
    <property type="expression patterns" value="Tissue enriched (bone)"/>
</dbReference>
<dbReference type="MalaCards" id="ALAS2"/>
<dbReference type="MIM" id="300751">
    <property type="type" value="phenotype"/>
</dbReference>
<dbReference type="MIM" id="300752">
    <property type="type" value="phenotype"/>
</dbReference>
<dbReference type="MIM" id="301300">
    <property type="type" value="gene"/>
</dbReference>
<dbReference type="neXtProt" id="NX_P22557"/>
<dbReference type="OpenTargets" id="ENSG00000158578"/>
<dbReference type="Orphanet" id="443197">
    <property type="disease" value="X-linked erythropoietic protoporphyria"/>
</dbReference>
<dbReference type="Orphanet" id="75563">
    <property type="disease" value="X-linked sideroblastic anemia"/>
</dbReference>
<dbReference type="PharmGKB" id="PA24689"/>
<dbReference type="VEuPathDB" id="HostDB:ENSG00000158578"/>
<dbReference type="eggNOG" id="KOG1360">
    <property type="taxonomic scope" value="Eukaryota"/>
</dbReference>
<dbReference type="GeneTree" id="ENSGT00940000159912"/>
<dbReference type="HOGENOM" id="CLU_015846_6_1_1"/>
<dbReference type="InParanoid" id="P22557"/>
<dbReference type="OMA" id="DQFFRNK"/>
<dbReference type="OrthoDB" id="10263824at2759"/>
<dbReference type="PAN-GO" id="P22557">
    <property type="GO annotations" value="5 GO annotations based on evolutionary models"/>
</dbReference>
<dbReference type="PhylomeDB" id="P22557"/>
<dbReference type="TreeFam" id="TF300724"/>
<dbReference type="BioCyc" id="MetaCyc:HS08311-MONOMER"/>
<dbReference type="BRENDA" id="2.3.1.37">
    <property type="organism ID" value="2681"/>
</dbReference>
<dbReference type="PathwayCommons" id="P22557"/>
<dbReference type="Reactome" id="R-HSA-189451">
    <property type="pathway name" value="Heme biosynthesis"/>
</dbReference>
<dbReference type="SignaLink" id="P22557"/>
<dbReference type="SIGNOR" id="P22557"/>
<dbReference type="UniPathway" id="UPA00251">
    <property type="reaction ID" value="UER00375"/>
</dbReference>
<dbReference type="BioGRID-ORCS" id="212">
    <property type="hits" value="19 hits in 788 CRISPR screens"/>
</dbReference>
<dbReference type="ChiTaRS" id="ALAS2">
    <property type="organism name" value="human"/>
</dbReference>
<dbReference type="GeneWiki" id="ALAS2"/>
<dbReference type="GenomeRNAi" id="212"/>
<dbReference type="Pharos" id="P22557">
    <property type="development level" value="Tbio"/>
</dbReference>
<dbReference type="PRO" id="PR:P22557"/>
<dbReference type="Proteomes" id="UP000005640">
    <property type="component" value="Chromosome X"/>
</dbReference>
<dbReference type="RNAct" id="P22557">
    <property type="molecule type" value="protein"/>
</dbReference>
<dbReference type="Bgee" id="ENSG00000158578">
    <property type="expression patterns" value="Expressed in trabecular bone tissue and 110 other cell types or tissues"/>
</dbReference>
<dbReference type="ExpressionAtlas" id="P22557">
    <property type="expression patterns" value="baseline and differential"/>
</dbReference>
<dbReference type="GO" id="GO:0005743">
    <property type="term" value="C:mitochondrial inner membrane"/>
    <property type="evidence" value="ECO:0000314"/>
    <property type="project" value="UniProtKB"/>
</dbReference>
<dbReference type="GO" id="GO:0005759">
    <property type="term" value="C:mitochondrial matrix"/>
    <property type="evidence" value="ECO:0000304"/>
    <property type="project" value="Reactome"/>
</dbReference>
<dbReference type="GO" id="GO:0005739">
    <property type="term" value="C:mitochondrion"/>
    <property type="evidence" value="ECO:0000314"/>
    <property type="project" value="UniProtKB"/>
</dbReference>
<dbReference type="GO" id="GO:0003870">
    <property type="term" value="F:5-aminolevulinate synthase activity"/>
    <property type="evidence" value="ECO:0000314"/>
    <property type="project" value="UniProtKB"/>
</dbReference>
<dbReference type="GO" id="GO:0030170">
    <property type="term" value="F:pyridoxal phosphate binding"/>
    <property type="evidence" value="ECO:0007669"/>
    <property type="project" value="InterPro"/>
</dbReference>
<dbReference type="GO" id="GO:0048821">
    <property type="term" value="P:erythrocyte development"/>
    <property type="evidence" value="ECO:0000318"/>
    <property type="project" value="GO_Central"/>
</dbReference>
<dbReference type="GO" id="GO:0030218">
    <property type="term" value="P:erythrocyte differentiation"/>
    <property type="evidence" value="ECO:0000250"/>
    <property type="project" value="UniProtKB"/>
</dbReference>
<dbReference type="GO" id="GO:0006785">
    <property type="term" value="P:heme B biosynthetic process"/>
    <property type="evidence" value="ECO:0000314"/>
    <property type="project" value="UniProt"/>
</dbReference>
<dbReference type="GO" id="GO:0006783">
    <property type="term" value="P:heme biosynthetic process"/>
    <property type="evidence" value="ECO:0000250"/>
    <property type="project" value="UniProtKB"/>
</dbReference>
<dbReference type="GO" id="GO:0042541">
    <property type="term" value="P:hemoglobin biosynthetic process"/>
    <property type="evidence" value="ECO:0000250"/>
    <property type="project" value="UniProtKB"/>
</dbReference>
<dbReference type="GO" id="GO:0006879">
    <property type="term" value="P:intracellular iron ion homeostasis"/>
    <property type="evidence" value="ECO:0000250"/>
    <property type="project" value="UniProtKB"/>
</dbReference>
<dbReference type="GO" id="GO:0032364">
    <property type="term" value="P:intracellular oxygen homeostasis"/>
    <property type="evidence" value="ECO:0000303"/>
    <property type="project" value="UniProtKB"/>
</dbReference>
<dbReference type="GO" id="GO:0006782">
    <property type="term" value="P:protoporphyrinogen IX biosynthetic process"/>
    <property type="evidence" value="ECO:0000314"/>
    <property type="project" value="UniProt"/>
</dbReference>
<dbReference type="GO" id="GO:0001666">
    <property type="term" value="P:response to hypoxia"/>
    <property type="evidence" value="ECO:0000314"/>
    <property type="project" value="UniProtKB"/>
</dbReference>
<dbReference type="CDD" id="cd06454">
    <property type="entry name" value="KBL_like"/>
    <property type="match status" value="1"/>
</dbReference>
<dbReference type="FunFam" id="3.90.1150.10:FF:000029">
    <property type="entry name" value="5-aminolevulinate synthase"/>
    <property type="match status" value="1"/>
</dbReference>
<dbReference type="FunFam" id="4.10.92.10:FF:000001">
    <property type="entry name" value="5-aminolevulinate synthase"/>
    <property type="match status" value="1"/>
</dbReference>
<dbReference type="FunFam" id="3.40.640.10:FF:000006">
    <property type="entry name" value="5-aminolevulinate synthase, mitochondrial"/>
    <property type="match status" value="1"/>
</dbReference>
<dbReference type="Gene3D" id="4.10.92.10">
    <property type="entry name" value="Aminolevulinic Acid Synthase 2"/>
    <property type="match status" value="1"/>
</dbReference>
<dbReference type="Gene3D" id="3.90.1150.10">
    <property type="entry name" value="Aspartate Aminotransferase, domain 1"/>
    <property type="match status" value="1"/>
</dbReference>
<dbReference type="Gene3D" id="3.40.640.10">
    <property type="entry name" value="Type I PLP-dependent aspartate aminotransferase-like (Major domain)"/>
    <property type="match status" value="1"/>
</dbReference>
<dbReference type="InterPro" id="IPR010961">
    <property type="entry name" value="4pyrrol_synth_NH2levulA_synth"/>
</dbReference>
<dbReference type="InterPro" id="IPR015118">
    <property type="entry name" value="5aminolev_synth_preseq"/>
</dbReference>
<dbReference type="InterPro" id="IPR001917">
    <property type="entry name" value="Aminotrans_II_pyridoxalP_BS"/>
</dbReference>
<dbReference type="InterPro" id="IPR004839">
    <property type="entry name" value="Aminotransferase_I/II_large"/>
</dbReference>
<dbReference type="InterPro" id="IPR050087">
    <property type="entry name" value="AON_synthase_class-II"/>
</dbReference>
<dbReference type="InterPro" id="IPR015424">
    <property type="entry name" value="PyrdxlP-dep_Trfase"/>
</dbReference>
<dbReference type="InterPro" id="IPR015421">
    <property type="entry name" value="PyrdxlP-dep_Trfase_major"/>
</dbReference>
<dbReference type="InterPro" id="IPR015422">
    <property type="entry name" value="PyrdxlP-dep_Trfase_small"/>
</dbReference>
<dbReference type="NCBIfam" id="TIGR01821">
    <property type="entry name" value="5aminolev_synth"/>
    <property type="match status" value="1"/>
</dbReference>
<dbReference type="PANTHER" id="PTHR13693:SF58">
    <property type="entry name" value="5-AMINOLEVULINATE SYNTHASE, ERYTHROID-SPECIFIC, MITOCHONDRIAL"/>
    <property type="match status" value="1"/>
</dbReference>
<dbReference type="PANTHER" id="PTHR13693">
    <property type="entry name" value="CLASS II AMINOTRANSFERASE/8-AMINO-7-OXONONANOATE SYNTHASE"/>
    <property type="match status" value="1"/>
</dbReference>
<dbReference type="Pfam" id="PF00155">
    <property type="entry name" value="Aminotran_1_2"/>
    <property type="match status" value="1"/>
</dbReference>
<dbReference type="Pfam" id="PF09029">
    <property type="entry name" value="Preseq_ALAS"/>
    <property type="match status" value="1"/>
</dbReference>
<dbReference type="SUPFAM" id="SSF53383">
    <property type="entry name" value="PLP-dependent transferases"/>
    <property type="match status" value="1"/>
</dbReference>
<dbReference type="PROSITE" id="PS00599">
    <property type="entry name" value="AA_TRANSFER_CLASS_2"/>
    <property type="match status" value="1"/>
</dbReference>
<evidence type="ECO:0000250" key="1">
    <source>
        <dbReference type="UniProtKB" id="P18079"/>
    </source>
</evidence>
<evidence type="ECO:0000269" key="2">
    <source>
    </source>
</evidence>
<evidence type="ECO:0000269" key="3">
    <source>
    </source>
</evidence>
<evidence type="ECO:0000269" key="4">
    <source>
    </source>
</evidence>
<evidence type="ECO:0000269" key="5">
    <source>
    </source>
</evidence>
<evidence type="ECO:0000269" key="6">
    <source>
    </source>
</evidence>
<evidence type="ECO:0000269" key="7">
    <source>
    </source>
</evidence>
<evidence type="ECO:0000269" key="8">
    <source>
    </source>
</evidence>
<evidence type="ECO:0000269" key="9">
    <source>
    </source>
</evidence>
<evidence type="ECO:0000269" key="10">
    <source>
    </source>
</evidence>
<evidence type="ECO:0000269" key="11">
    <source>
    </source>
</evidence>
<evidence type="ECO:0000269" key="12">
    <source>
    </source>
</evidence>
<evidence type="ECO:0000269" key="13">
    <source>
    </source>
</evidence>
<evidence type="ECO:0000269" key="14">
    <source>
    </source>
</evidence>
<evidence type="ECO:0000269" key="15">
    <source>
    </source>
</evidence>
<evidence type="ECO:0000269" key="16">
    <source>
    </source>
</evidence>
<evidence type="ECO:0000269" key="17">
    <source>
    </source>
</evidence>
<evidence type="ECO:0000269" key="18">
    <source>
    </source>
</evidence>
<evidence type="ECO:0000303" key="19">
    <source>
    </source>
</evidence>
<evidence type="ECO:0000303" key="20">
    <source>
    </source>
</evidence>
<evidence type="ECO:0000303" key="21">
    <source>
    </source>
</evidence>
<evidence type="ECO:0000303" key="22">
    <source>
    </source>
</evidence>
<evidence type="ECO:0000303" key="23">
    <source>
    </source>
</evidence>
<evidence type="ECO:0000305" key="24"/>
<evidence type="ECO:0000305" key="25">
    <source>
    </source>
</evidence>
<evidence type="ECO:0000305" key="26">
    <source>
    </source>
</evidence>
<evidence type="ECO:0000312" key="27">
    <source>
        <dbReference type="HGNC" id="HGNC:397"/>
    </source>
</evidence>
<evidence type="ECO:0007744" key="28">
    <source>
        <dbReference type="PDB" id="6HRH"/>
    </source>
</evidence>
<evidence type="ECO:0007829" key="29">
    <source>
        <dbReference type="PDB" id="5QR1"/>
    </source>
</evidence>
<protein>
    <recommendedName>
        <fullName>5-aminolevulinate synthase, erythroid-specific, mitochondrial</fullName>
        <shortName>ALAS-E</shortName>
        <ecNumber evidence="6 12 13 14 15">2.3.1.37</ecNumber>
    </recommendedName>
    <alternativeName>
        <fullName>5-aminolevulinic acid synthase 2</fullName>
    </alternativeName>
    <alternativeName>
        <fullName>Delta-ALA synthase 2</fullName>
    </alternativeName>
    <alternativeName>
        <fullName>Delta-aminolevulinate synthase 2</fullName>
    </alternativeName>
</protein>
<reference key="1">
    <citation type="journal article" date="1990" name="Nucleic Acids Res.">
        <title>Two different genes encode delta-aminolevulinate synthase in humans: nucleotide sequences of cDNAs for the housekeeping and erythroid genes.</title>
        <authorList>
            <person name="Bishop D.F."/>
        </authorList>
    </citation>
    <scope>NUCLEOTIDE SEQUENCE [MRNA] (ISOFORM 1)</scope>
    <source>
        <tissue>Liver</tissue>
    </source>
</reference>
<reference key="2">
    <citation type="journal article" date="1991" name="EMBO J.">
        <title>Human erythroid 5-aminolevulinate synthase: promoter analysis and identification of an iron-responsive element in the mRNA.</title>
        <authorList>
            <person name="Cox T.C."/>
            <person name="Bawden M.J."/>
            <person name="Martin A."/>
            <person name="May B.K."/>
        </authorList>
    </citation>
    <scope>NUCLEOTIDE SEQUENCE [MRNA] (ISOFORM 1)</scope>
    <scope>FUNCTION</scope>
    <scope>TISSUE SPECIFICITY</scope>
    <source>
        <tissue>Liver</tissue>
    </source>
</reference>
<reference key="3">
    <citation type="journal article" date="1998" name="J. Biol. Chem.">
        <title>Identification and characterization of a conserved erythroid-specific enhancer located in intron 8 of the human 5-aminolevulinate synthase 2 gene.</title>
        <authorList>
            <person name="Surinya K.H."/>
            <person name="Cox T.C."/>
            <person name="May B.K."/>
        </authorList>
    </citation>
    <scope>NUCLEOTIDE SEQUENCE [GENOMIC DNA]</scope>
</reference>
<reference key="4">
    <citation type="journal article" date="2004" name="Nat. Genet.">
        <title>Complete sequencing and characterization of 21,243 full-length human cDNAs.</title>
        <authorList>
            <person name="Ota T."/>
            <person name="Suzuki Y."/>
            <person name="Nishikawa T."/>
            <person name="Otsuki T."/>
            <person name="Sugiyama T."/>
            <person name="Irie R."/>
            <person name="Wakamatsu A."/>
            <person name="Hayashi K."/>
            <person name="Sato H."/>
            <person name="Nagai K."/>
            <person name="Kimura K."/>
            <person name="Makita H."/>
            <person name="Sekine M."/>
            <person name="Obayashi M."/>
            <person name="Nishi T."/>
            <person name="Shibahara T."/>
            <person name="Tanaka T."/>
            <person name="Ishii S."/>
            <person name="Yamamoto J."/>
            <person name="Saito K."/>
            <person name="Kawai Y."/>
            <person name="Isono Y."/>
            <person name="Nakamura Y."/>
            <person name="Nagahari K."/>
            <person name="Murakami K."/>
            <person name="Yasuda T."/>
            <person name="Iwayanagi T."/>
            <person name="Wagatsuma M."/>
            <person name="Shiratori A."/>
            <person name="Sudo H."/>
            <person name="Hosoiri T."/>
            <person name="Kaku Y."/>
            <person name="Kodaira H."/>
            <person name="Kondo H."/>
            <person name="Sugawara M."/>
            <person name="Takahashi M."/>
            <person name="Kanda K."/>
            <person name="Yokoi T."/>
            <person name="Furuya T."/>
            <person name="Kikkawa E."/>
            <person name="Omura Y."/>
            <person name="Abe K."/>
            <person name="Kamihara K."/>
            <person name="Katsuta N."/>
            <person name="Sato K."/>
            <person name="Tanikawa M."/>
            <person name="Yamazaki M."/>
            <person name="Ninomiya K."/>
            <person name="Ishibashi T."/>
            <person name="Yamashita H."/>
            <person name="Murakawa K."/>
            <person name="Fujimori K."/>
            <person name="Tanai H."/>
            <person name="Kimata M."/>
            <person name="Watanabe M."/>
            <person name="Hiraoka S."/>
            <person name="Chiba Y."/>
            <person name="Ishida S."/>
            <person name="Ono Y."/>
            <person name="Takiguchi S."/>
            <person name="Watanabe S."/>
            <person name="Yosida M."/>
            <person name="Hotuta T."/>
            <person name="Kusano J."/>
            <person name="Kanehori K."/>
            <person name="Takahashi-Fujii A."/>
            <person name="Hara H."/>
            <person name="Tanase T.-O."/>
            <person name="Nomura Y."/>
            <person name="Togiya S."/>
            <person name="Komai F."/>
            <person name="Hara R."/>
            <person name="Takeuchi K."/>
            <person name="Arita M."/>
            <person name="Imose N."/>
            <person name="Musashino K."/>
            <person name="Yuuki H."/>
            <person name="Oshima A."/>
            <person name="Sasaki N."/>
            <person name="Aotsuka S."/>
            <person name="Yoshikawa Y."/>
            <person name="Matsunawa H."/>
            <person name="Ichihara T."/>
            <person name="Shiohata N."/>
            <person name="Sano S."/>
            <person name="Moriya S."/>
            <person name="Momiyama H."/>
            <person name="Satoh N."/>
            <person name="Takami S."/>
            <person name="Terashima Y."/>
            <person name="Suzuki O."/>
            <person name="Nakagawa S."/>
            <person name="Senoh A."/>
            <person name="Mizoguchi H."/>
            <person name="Goto Y."/>
            <person name="Shimizu F."/>
            <person name="Wakebe H."/>
            <person name="Hishigaki H."/>
            <person name="Watanabe T."/>
            <person name="Sugiyama A."/>
            <person name="Takemoto M."/>
            <person name="Kawakami B."/>
            <person name="Yamazaki M."/>
            <person name="Watanabe K."/>
            <person name="Kumagai A."/>
            <person name="Itakura S."/>
            <person name="Fukuzumi Y."/>
            <person name="Fujimori Y."/>
            <person name="Komiyama M."/>
            <person name="Tashiro H."/>
            <person name="Tanigami A."/>
            <person name="Fujiwara T."/>
            <person name="Ono T."/>
            <person name="Yamada K."/>
            <person name="Fujii Y."/>
            <person name="Ozaki K."/>
            <person name="Hirao M."/>
            <person name="Ohmori Y."/>
            <person name="Kawabata A."/>
            <person name="Hikiji T."/>
            <person name="Kobatake N."/>
            <person name="Inagaki H."/>
            <person name="Ikema Y."/>
            <person name="Okamoto S."/>
            <person name="Okitani R."/>
            <person name="Kawakami T."/>
            <person name="Noguchi S."/>
            <person name="Itoh T."/>
            <person name="Shigeta K."/>
            <person name="Senba T."/>
            <person name="Matsumura K."/>
            <person name="Nakajima Y."/>
            <person name="Mizuno T."/>
            <person name="Morinaga M."/>
            <person name="Sasaki M."/>
            <person name="Togashi T."/>
            <person name="Oyama M."/>
            <person name="Hata H."/>
            <person name="Watanabe M."/>
            <person name="Komatsu T."/>
            <person name="Mizushima-Sugano J."/>
            <person name="Satoh T."/>
            <person name="Shirai Y."/>
            <person name="Takahashi Y."/>
            <person name="Nakagawa K."/>
            <person name="Okumura K."/>
            <person name="Nagase T."/>
            <person name="Nomura N."/>
            <person name="Kikuchi H."/>
            <person name="Masuho Y."/>
            <person name="Yamashita R."/>
            <person name="Nakai K."/>
            <person name="Yada T."/>
            <person name="Nakamura Y."/>
            <person name="Ohara O."/>
            <person name="Isogai T."/>
            <person name="Sugano S."/>
        </authorList>
    </citation>
    <scope>NUCLEOTIDE SEQUENCE [LARGE SCALE MRNA] (ISOFORMS 1 AND 2)</scope>
    <source>
        <tissue>Lung</tissue>
        <tissue>Placenta</tissue>
        <tissue>Umbilical cord blood</tissue>
    </source>
</reference>
<reference key="5">
    <citation type="journal article" date="2005" name="Nature">
        <title>The DNA sequence of the human X chromosome.</title>
        <authorList>
            <person name="Ross M.T."/>
            <person name="Grafham D.V."/>
            <person name="Coffey A.J."/>
            <person name="Scherer S."/>
            <person name="McLay K."/>
            <person name="Muzny D."/>
            <person name="Platzer M."/>
            <person name="Howell G.R."/>
            <person name="Burrows C."/>
            <person name="Bird C.P."/>
            <person name="Frankish A."/>
            <person name="Lovell F.L."/>
            <person name="Howe K.L."/>
            <person name="Ashurst J.L."/>
            <person name="Fulton R.S."/>
            <person name="Sudbrak R."/>
            <person name="Wen G."/>
            <person name="Jones M.C."/>
            <person name="Hurles M.E."/>
            <person name="Andrews T.D."/>
            <person name="Scott C.E."/>
            <person name="Searle S."/>
            <person name="Ramser J."/>
            <person name="Whittaker A."/>
            <person name="Deadman R."/>
            <person name="Carter N.P."/>
            <person name="Hunt S.E."/>
            <person name="Chen R."/>
            <person name="Cree A."/>
            <person name="Gunaratne P."/>
            <person name="Havlak P."/>
            <person name="Hodgson A."/>
            <person name="Metzker M.L."/>
            <person name="Richards S."/>
            <person name="Scott G."/>
            <person name="Steffen D."/>
            <person name="Sodergren E."/>
            <person name="Wheeler D.A."/>
            <person name="Worley K.C."/>
            <person name="Ainscough R."/>
            <person name="Ambrose K.D."/>
            <person name="Ansari-Lari M.A."/>
            <person name="Aradhya S."/>
            <person name="Ashwell R.I."/>
            <person name="Babbage A.K."/>
            <person name="Bagguley C.L."/>
            <person name="Ballabio A."/>
            <person name="Banerjee R."/>
            <person name="Barker G.E."/>
            <person name="Barlow K.F."/>
            <person name="Barrett I.P."/>
            <person name="Bates K.N."/>
            <person name="Beare D.M."/>
            <person name="Beasley H."/>
            <person name="Beasley O."/>
            <person name="Beck A."/>
            <person name="Bethel G."/>
            <person name="Blechschmidt K."/>
            <person name="Brady N."/>
            <person name="Bray-Allen S."/>
            <person name="Bridgeman A.M."/>
            <person name="Brown A.J."/>
            <person name="Brown M.J."/>
            <person name="Bonnin D."/>
            <person name="Bruford E.A."/>
            <person name="Buhay C."/>
            <person name="Burch P."/>
            <person name="Burford D."/>
            <person name="Burgess J."/>
            <person name="Burrill W."/>
            <person name="Burton J."/>
            <person name="Bye J.M."/>
            <person name="Carder C."/>
            <person name="Carrel L."/>
            <person name="Chako J."/>
            <person name="Chapman J.C."/>
            <person name="Chavez D."/>
            <person name="Chen E."/>
            <person name="Chen G."/>
            <person name="Chen Y."/>
            <person name="Chen Z."/>
            <person name="Chinault C."/>
            <person name="Ciccodicola A."/>
            <person name="Clark S.Y."/>
            <person name="Clarke G."/>
            <person name="Clee C.M."/>
            <person name="Clegg S."/>
            <person name="Clerc-Blankenburg K."/>
            <person name="Clifford K."/>
            <person name="Cobley V."/>
            <person name="Cole C.G."/>
            <person name="Conquer J.S."/>
            <person name="Corby N."/>
            <person name="Connor R.E."/>
            <person name="David R."/>
            <person name="Davies J."/>
            <person name="Davis C."/>
            <person name="Davis J."/>
            <person name="Delgado O."/>
            <person name="Deshazo D."/>
            <person name="Dhami P."/>
            <person name="Ding Y."/>
            <person name="Dinh H."/>
            <person name="Dodsworth S."/>
            <person name="Draper H."/>
            <person name="Dugan-Rocha S."/>
            <person name="Dunham A."/>
            <person name="Dunn M."/>
            <person name="Durbin K.J."/>
            <person name="Dutta I."/>
            <person name="Eades T."/>
            <person name="Ellwood M."/>
            <person name="Emery-Cohen A."/>
            <person name="Errington H."/>
            <person name="Evans K.L."/>
            <person name="Faulkner L."/>
            <person name="Francis F."/>
            <person name="Frankland J."/>
            <person name="Fraser A.E."/>
            <person name="Galgoczy P."/>
            <person name="Gilbert J."/>
            <person name="Gill R."/>
            <person name="Gloeckner G."/>
            <person name="Gregory S.G."/>
            <person name="Gribble S."/>
            <person name="Griffiths C."/>
            <person name="Grocock R."/>
            <person name="Gu Y."/>
            <person name="Gwilliam R."/>
            <person name="Hamilton C."/>
            <person name="Hart E.A."/>
            <person name="Hawes A."/>
            <person name="Heath P.D."/>
            <person name="Heitmann K."/>
            <person name="Hennig S."/>
            <person name="Hernandez J."/>
            <person name="Hinzmann B."/>
            <person name="Ho S."/>
            <person name="Hoffs M."/>
            <person name="Howden P.J."/>
            <person name="Huckle E.J."/>
            <person name="Hume J."/>
            <person name="Hunt P.J."/>
            <person name="Hunt A.R."/>
            <person name="Isherwood J."/>
            <person name="Jacob L."/>
            <person name="Johnson D."/>
            <person name="Jones S."/>
            <person name="de Jong P.J."/>
            <person name="Joseph S.S."/>
            <person name="Keenan S."/>
            <person name="Kelly S."/>
            <person name="Kershaw J.K."/>
            <person name="Khan Z."/>
            <person name="Kioschis P."/>
            <person name="Klages S."/>
            <person name="Knights A.J."/>
            <person name="Kosiura A."/>
            <person name="Kovar-Smith C."/>
            <person name="Laird G.K."/>
            <person name="Langford C."/>
            <person name="Lawlor S."/>
            <person name="Leversha M."/>
            <person name="Lewis L."/>
            <person name="Liu W."/>
            <person name="Lloyd C."/>
            <person name="Lloyd D.M."/>
            <person name="Loulseged H."/>
            <person name="Loveland J.E."/>
            <person name="Lovell J.D."/>
            <person name="Lozado R."/>
            <person name="Lu J."/>
            <person name="Lyne R."/>
            <person name="Ma J."/>
            <person name="Maheshwari M."/>
            <person name="Matthews L.H."/>
            <person name="McDowall J."/>
            <person name="McLaren S."/>
            <person name="McMurray A."/>
            <person name="Meidl P."/>
            <person name="Meitinger T."/>
            <person name="Milne S."/>
            <person name="Miner G."/>
            <person name="Mistry S.L."/>
            <person name="Morgan M."/>
            <person name="Morris S."/>
            <person name="Mueller I."/>
            <person name="Mullikin J.C."/>
            <person name="Nguyen N."/>
            <person name="Nordsiek G."/>
            <person name="Nyakatura G."/>
            <person name="O'dell C.N."/>
            <person name="Okwuonu G."/>
            <person name="Palmer S."/>
            <person name="Pandian R."/>
            <person name="Parker D."/>
            <person name="Parrish J."/>
            <person name="Pasternak S."/>
            <person name="Patel D."/>
            <person name="Pearce A.V."/>
            <person name="Pearson D.M."/>
            <person name="Pelan S.E."/>
            <person name="Perez L."/>
            <person name="Porter K.M."/>
            <person name="Ramsey Y."/>
            <person name="Reichwald K."/>
            <person name="Rhodes S."/>
            <person name="Ridler K.A."/>
            <person name="Schlessinger D."/>
            <person name="Schueler M.G."/>
            <person name="Sehra H.K."/>
            <person name="Shaw-Smith C."/>
            <person name="Shen H."/>
            <person name="Sheridan E.M."/>
            <person name="Shownkeen R."/>
            <person name="Skuce C.D."/>
            <person name="Smith M.L."/>
            <person name="Sotheran E.C."/>
            <person name="Steingruber H.E."/>
            <person name="Steward C.A."/>
            <person name="Storey R."/>
            <person name="Swann R.M."/>
            <person name="Swarbreck D."/>
            <person name="Tabor P.E."/>
            <person name="Taudien S."/>
            <person name="Taylor T."/>
            <person name="Teague B."/>
            <person name="Thomas K."/>
            <person name="Thorpe A."/>
            <person name="Timms K."/>
            <person name="Tracey A."/>
            <person name="Trevanion S."/>
            <person name="Tromans A.C."/>
            <person name="d'Urso M."/>
            <person name="Verduzco D."/>
            <person name="Villasana D."/>
            <person name="Waldron L."/>
            <person name="Wall M."/>
            <person name="Wang Q."/>
            <person name="Warren J."/>
            <person name="Warry G.L."/>
            <person name="Wei X."/>
            <person name="West A."/>
            <person name="Whitehead S.L."/>
            <person name="Whiteley M.N."/>
            <person name="Wilkinson J.E."/>
            <person name="Willey D.L."/>
            <person name="Williams G."/>
            <person name="Williams L."/>
            <person name="Williamson A."/>
            <person name="Williamson H."/>
            <person name="Wilming L."/>
            <person name="Woodmansey R.L."/>
            <person name="Wray P.W."/>
            <person name="Yen J."/>
            <person name="Zhang J."/>
            <person name="Zhou J."/>
            <person name="Zoghbi H."/>
            <person name="Zorilla S."/>
            <person name="Buck D."/>
            <person name="Reinhardt R."/>
            <person name="Poustka A."/>
            <person name="Rosenthal A."/>
            <person name="Lehrach H."/>
            <person name="Meindl A."/>
            <person name="Minx P.J."/>
            <person name="Hillier L.W."/>
            <person name="Willard H.F."/>
            <person name="Wilson R.K."/>
            <person name="Waterston R.H."/>
            <person name="Rice C.M."/>
            <person name="Vaudin M."/>
            <person name="Coulson A."/>
            <person name="Nelson D.L."/>
            <person name="Weinstock G."/>
            <person name="Sulston J.E."/>
            <person name="Durbin R.M."/>
            <person name="Hubbard T."/>
            <person name="Gibbs R.A."/>
            <person name="Beck S."/>
            <person name="Rogers J."/>
            <person name="Bentley D.R."/>
        </authorList>
    </citation>
    <scope>NUCLEOTIDE SEQUENCE [LARGE SCALE GENOMIC DNA]</scope>
</reference>
<reference key="6">
    <citation type="submission" date="2005-07" db="EMBL/GenBank/DDBJ databases">
        <authorList>
            <person name="Mural R.J."/>
            <person name="Istrail S."/>
            <person name="Sutton G."/>
            <person name="Florea L."/>
            <person name="Halpern A.L."/>
            <person name="Mobarry C.M."/>
            <person name="Lippert R."/>
            <person name="Walenz B."/>
            <person name="Shatkay H."/>
            <person name="Dew I."/>
            <person name="Miller J.R."/>
            <person name="Flanigan M.J."/>
            <person name="Edwards N.J."/>
            <person name="Bolanos R."/>
            <person name="Fasulo D."/>
            <person name="Halldorsson B.V."/>
            <person name="Hannenhalli S."/>
            <person name="Turner R."/>
            <person name="Yooseph S."/>
            <person name="Lu F."/>
            <person name="Nusskern D.R."/>
            <person name="Shue B.C."/>
            <person name="Zheng X.H."/>
            <person name="Zhong F."/>
            <person name="Delcher A.L."/>
            <person name="Huson D.H."/>
            <person name="Kravitz S.A."/>
            <person name="Mouchard L."/>
            <person name="Reinert K."/>
            <person name="Remington K.A."/>
            <person name="Clark A.G."/>
            <person name="Waterman M.S."/>
            <person name="Eichler E.E."/>
            <person name="Adams M.D."/>
            <person name="Hunkapiller M.W."/>
            <person name="Myers E.W."/>
            <person name="Venter J.C."/>
        </authorList>
    </citation>
    <scope>NUCLEOTIDE SEQUENCE [LARGE SCALE GENOMIC DNA]</scope>
</reference>
<reference key="7">
    <citation type="journal article" date="2004" name="Genome Res.">
        <title>The status, quality, and expansion of the NIH full-length cDNA project: the Mammalian Gene Collection (MGC).</title>
        <authorList>
            <consortium name="The MGC Project Team"/>
        </authorList>
    </citation>
    <scope>NUCLEOTIDE SEQUENCE [LARGE SCALE MRNA] (ISOFORM 4)</scope>
    <source>
        <tissue>Pancreas</tissue>
    </source>
</reference>
<reference key="8">
    <citation type="journal article" date="2004" name="Int. J. Biochem. Cell Biol.">
        <title>The major splice variant of human 5-aminolevulinate synthase-2 contributes significantly to erythroid heme biosynthesis.</title>
        <authorList>
            <person name="Cox T.C."/>
            <person name="Sadlon T.J."/>
            <person name="Schwarz Q.P."/>
            <person name="Matthews C.S."/>
            <person name="Wise P.D."/>
            <person name="Cox L.L."/>
            <person name="Bottomley S.S."/>
            <person name="May B.K."/>
        </authorList>
    </citation>
    <scope>ALTERNATIVE SPLICING (ISOFORMS 1; 2; 3 AND 4)</scope>
    <scope>SUBCELLULAR LOCATION</scope>
    <scope>CATALYTIC ACTIVITY</scope>
    <scope>TRANSIT PEPTIDE CLEAVAGE SITE</scope>
    <scope>INTERACTION WITH SUCLA2</scope>
    <scope>FUNCTION</scope>
    <scope>TISSUE SPECIFICITY</scope>
</reference>
<reference key="9">
    <citation type="journal article" date="2021" name="Blood Adv.">
        <title>The immunometabolite itaconate inhibits heme synthesis and remodels cellular metabolism in erythroid precursors.</title>
        <authorList>
            <person name="Marcero J.R."/>
            <person name="Cox J.E."/>
            <person name="Bergonia H.A."/>
            <person name="Medlock A.E."/>
            <person name="Phillips J.D."/>
            <person name="Dailey H.A."/>
        </authorList>
    </citation>
    <scope>FUNCTION</scope>
    <scope>CATALYTIC ACTIVITY</scope>
    <scope>BIOPHYSICOCHEMICAL PROPERTIES</scope>
    <scope>ACTIVITY REGULATION</scope>
</reference>
<reference evidence="28" key="10">
    <citation type="journal article" date="2020" name="Nat. Commun.">
        <title>Human aminolevulinate synthase structure reveals a eukaryotic-specific autoinhibitory loop regulating substrate binding and product release.</title>
        <authorList>
            <person name="Bailey H.J."/>
            <person name="Bezerra G.A."/>
            <person name="Marcero J.R."/>
            <person name="Padhi S."/>
            <person name="Foster W.R."/>
            <person name="Rembeza E."/>
            <person name="Roy A."/>
            <person name="Bishop D.F."/>
            <person name="Desnick R.J."/>
            <person name="Bulusu G."/>
            <person name="Dailey H.A. Jr."/>
            <person name="Yue W.W."/>
        </authorList>
    </citation>
    <scope>X-RAY CRYSTALLOGRAPHY (2.3 ANGSTROMS) OF 143-578</scope>
    <scope>CATALYTIC ACTIVITY</scope>
    <scope>FUNCTION</scope>
    <scope>INTERACTION WITH SUCLA2</scope>
    <scope>BIOPHYSICOCHEMICAL PROPERTIES</scope>
    <scope>SUBUNIT</scope>
    <scope>COFACTOR</scope>
    <scope>MUTAGENESIS OF ARG-511</scope>
</reference>
<reference key="11">
    <citation type="journal article" date="1994" name="N. Engl. J. Med.">
        <title>X-linked pyridoxine-responsive sideroblastic anemia due to a Thr388-to-Ser substitution in erythroid 5-aminolevulinate synthase.</title>
        <authorList>
            <person name="Cox T.C."/>
            <person name="Bottomley S.S."/>
            <person name="Wiley J.S."/>
            <person name="Bawden M.J."/>
            <person name="Matthews C.S."/>
            <person name="May B.K."/>
        </authorList>
    </citation>
    <scope>VARIANT SIDBA1 SER-388</scope>
</reference>
<reference key="12">
    <citation type="journal article" date="1992" name="Proc. Natl. Acad. Sci. U.S.A.">
        <title>Enzymatic defect in 'X-linked' sideroblastic anemia: molecular evidence for erythroid delta-aminolevulinate synthase deficiency.</title>
        <authorList>
            <person name="Cotter P.D."/>
            <person name="Baumann M."/>
            <person name="Bishop D.F."/>
        </authorList>
    </citation>
    <scope>VARIANT SIDBA1 ASN-476</scope>
</reference>
<reference key="13">
    <citation type="journal article" date="1998" name="Br. J. Haematol.">
        <title>R411C mutation of the ALAS2 gene encodes a pyridoxine-responsive enzyme with low activity.</title>
        <authorList>
            <person name="Furuyama K."/>
            <person name="Uno R."/>
            <person name="Urabe A."/>
            <person name="Hayashi N."/>
            <person name="Fujita H."/>
            <person name="Kondo M."/>
            <person name="Sassa S."/>
            <person name="Yamamoto M."/>
        </authorList>
    </citation>
    <scope>VARIANT SIDBA1 CYS-411</scope>
</reference>
<reference key="14">
    <citation type="journal article" date="1999" name="Am. J. Hematol.">
        <title>A novel mutation of the erythroid-specific gamma-aminolevulinate synthase gene in a patient with non-inherited pyridoxine-responsive sideroblastic anemia.</title>
        <authorList>
            <person name="Harigae H."/>
            <person name="Furuyama K."/>
            <person name="Kudo K."/>
            <person name="Hayashi N."/>
            <person name="Yamamoto M."/>
            <person name="Sassa S."/>
            <person name="Sasaki T."/>
        </authorList>
    </citation>
    <scope>VARIANT SIDBA1 GLN-204</scope>
</reference>
<reference key="15">
    <citation type="journal article" date="1999" name="Blood">
        <title>Four new mutations in the erythroid-specific 5-aminolevulinate synthase (ALAS2) gene causing X-linked sideroblastic anemia: increased pyridoxine responsiveness after removal of iron overload by phlebotomy and coinheritance of hereditary hemochromatosis.</title>
        <authorList>
            <person name="Cotter P.D."/>
            <person name="May A."/>
            <person name="Li L."/>
            <person name="Al-Sabah A.I."/>
            <person name="Fitzsimons E.J."/>
            <person name="Cazzola M."/>
            <person name="Bishop D.F."/>
        </authorList>
    </citation>
    <scope>VARIANTS SIDBA1 HIS-199; CYS-411; GLN-448 AND CYS-452</scope>
</reference>
<reference key="16">
    <citation type="journal article" date="2002" name="Blood">
        <title>Absent phenotypic expression of X-linked sideroblastic anemia in one of 2 brothers with a novel ALAS2 mutation.</title>
        <authorList>
            <person name="Cazzola M."/>
            <person name="May A."/>
            <person name="Bergamaschi G."/>
            <person name="Cerani P."/>
            <person name="Ferrillo S."/>
            <person name="Bishop D.F."/>
        </authorList>
    </citation>
    <scope>VARIANT SIDBA1 HIS-560</scope>
</reference>
<reference key="17">
    <citation type="journal article" date="2002" name="Clin. Chim. Acta">
        <title>A novel mutation in exon 5 of the ALAS2 gene results in X-linked sideroblastic anemia.</title>
        <authorList>
            <person name="Hurford M.T."/>
            <person name="Marshall-Taylor C."/>
            <person name="Vicki S.L."/>
            <person name="Zhou J.Z."/>
            <person name="Silverman L.M."/>
            <person name="Rezuke W.N."/>
            <person name="Altman A."/>
            <person name="Tsongalis G.J."/>
        </authorList>
    </citation>
    <scope>VARIANT SIDBA1 TYR-159</scope>
</reference>
<reference key="18">
    <citation type="journal article" date="2006" name="Blood Cells Mol. Dis.">
        <title>Three kinships with ALAS2 P520L (c. 1559 C --&gt; T) mutation, two in association with severe iron overload, and one with sideroblastic anemia and severe iron overload.</title>
        <authorList>
            <person name="Lee P.L."/>
            <person name="Barton J.C."/>
            <person name="Rao S.V."/>
            <person name="Acton R.T."/>
            <person name="Adler B.K."/>
            <person name="Beutler E."/>
        </authorList>
    </citation>
    <scope>VARIANTS SIDBA1 LEU-520 AND HIS-560</scope>
</reference>
<reference key="19">
    <citation type="journal article" date="2008" name="Am. J. Hum. Genet.">
        <title>C-terminal deletions in the ALAS2 gene lead to gain of function and cause X-linked dominant protoporphyria without anemia or iron overload.</title>
        <authorList>
            <person name="Whatley S.D."/>
            <person name="Ducamp S."/>
            <person name="Gouya L."/>
            <person name="Grandchamp B."/>
            <person name="Beaumont C."/>
            <person name="Badminton M.N."/>
            <person name="Elder G.H."/>
            <person name="Holme S.A."/>
            <person name="Anstey A.V."/>
            <person name="Parker M."/>
            <person name="Corrigall A.V."/>
            <person name="Meissner P.N."/>
            <person name="Hift R.J."/>
            <person name="Marsden J.T."/>
            <person name="Ma Y."/>
            <person name="Mieli-Vergani G."/>
            <person name="Deybach J.C."/>
            <person name="Puy H."/>
        </authorList>
    </citation>
    <scope>INVOLVEMENT IN XLDPT</scope>
</reference>
<reference key="20">
    <citation type="journal article" date="2010" name="Pediatr. Blood Cancer">
        <title>Systematic molecular genetic analysis of congenital sideroblastic anemia: evidence for genetic heterogeneity and identification of novel mutations.</title>
        <authorList>
            <person name="Bergmann A.K."/>
            <person name="Campagna D.R."/>
            <person name="McLoughlin E.M."/>
            <person name="Agarwal S."/>
            <person name="Fleming M.D."/>
            <person name="Bottomley S.S."/>
            <person name="Neufeld E.J."/>
        </authorList>
    </citation>
    <scope>VARIANTS SIDBA1 LEU-165; CYS-170; ALA-301; CYS-411; GLY-452; GLY-517 AND LEU-520</scope>
</reference>
<reference key="21">
    <citation type="journal article" date="2011" name="Acta Haematol.">
        <title>New mutation in erythroid-specific delta-aminolevulinate synthase as the cause of X-linked sideroblastic anemia responsive to pyridoxine.</title>
        <authorList>
            <person name="Kucerova J."/>
            <person name="Horvathova M."/>
            <person name="Mojzikova R."/>
            <person name="Belohlavkova P."/>
            <person name="Cermak J."/>
            <person name="Divoky V."/>
        </authorList>
    </citation>
    <scope>VARIANTS SIDBA1 GLU-156; CYS-452 AND HIS-452</scope>
    <scope>CHARACTERIZATION OF VARIANT SIDBA1 GLU-156</scope>
    <scope>FUNCTION</scope>
    <scope>CATALYTIC ACTIVITY</scope>
</reference>
<reference key="22">
    <citation type="journal article" date="2011" name="Blood">
        <title>ALAS2 acts as a modifier gene in patients with congenital erythropoietic porphyria.</title>
        <authorList>
            <person name="To-Figueras J."/>
            <person name="Ducamp S."/>
            <person name="Clayton J."/>
            <person name="Badenas C."/>
            <person name="Delaby C."/>
            <person name="Ged C."/>
            <person name="Lyoumi S."/>
            <person name="Gouya L."/>
            <person name="de Verneuil H."/>
            <person name="Beaumont C."/>
            <person name="Ferreira G.C."/>
            <person name="Deybach J.C."/>
            <person name="Herrero C."/>
            <person name="Puy H."/>
        </authorList>
    </citation>
    <scope>VARIANT PHE-586</scope>
    <scope>CHARACTERIZATION OF VARIANT PHE-586</scope>
    <scope>POSSIBLE ROLE AS MODIFIER GENE IN ERYTHROPOIETIC DISORDERS</scope>
    <scope>FUNCTION</scope>
    <scope>CATALYTIC ACTIVITY</scope>
</reference>
<reference key="23">
    <citation type="journal article" date="2011" name="Hum. Mutat.">
        <title>Sideroblastic anemia: molecular analysis of the ALAS2 gene in a series of 29 probands and functional studies of 10 missense mutations.</title>
        <authorList>
            <person name="Ducamp S."/>
            <person name="Kannengiesser C."/>
            <person name="Touati M."/>
            <person name="Garcon L."/>
            <person name="Guerci-Bresler A."/>
            <person name="Guichard J.F."/>
            <person name="Vermylen C."/>
            <person name="Dochir J."/>
            <person name="Poirel H.A."/>
            <person name="Fouyssac F."/>
            <person name="Mansuy L."/>
            <person name="Leroux G."/>
            <person name="Tertian G."/>
            <person name="Girot R."/>
            <person name="Heimpel H."/>
            <person name="Matthes T."/>
            <person name="Talbi N."/>
            <person name="Deybach J.C."/>
            <person name="Beaumont C."/>
            <person name="Puy H."/>
            <person name="Grandchamp B."/>
        </authorList>
    </citation>
    <scope>VARIANTS SIDBA1 HIS-170; HIS-218; LYS-242; ASN-263; LEU-339; CYS-375; HIS-411; GLY-452 AND HIS-572</scope>
    <scope>VARIANT LEU-520</scope>
    <scope>CHARACTERIZATION OF VARIANTS SIDBA1 HIS-170; HIS-218; LYS-242; ASN-263; LEU-339; CYS-375; HIS-411; GLY-452 AND HIS-572</scope>
    <scope>FUNCTION</scope>
    <scope>CATALYTIC ACTIVITY</scope>
</reference>
<name>HEM0_HUMAN</name>
<sequence length="587" mass="64633">MVTAAMLLQCCPVLARGPTSLLGKVVKTHQFLFGIGRCPILATQGPNCSQIHLKATKAGGDSPSWAKGHCPFMLSELQDGKSKIVQKAAPEVQEDVKAFKTDLPSSLVSVSLRKPFSGPQEQEQISGKVTHLIQNNMPGNYVFSYDQFFRDKIMEKKQDHTYRVFKTVNRWADAYPFAQHFSEASVASKDVSVWCSNDYLGMSRHPQVLQATQETLQRHGAGAGGTRNISGTSKFHVELEQELAELHQKDSALLFSSCFVANDSTLFTLAKILPGCEIYSDAGNHASMIQGIRNSGAAKFVFRHNDPDHLKKLLEKSNPKIPKIVAFETVHSMDGAICPLEELCDVSHQYGALTFVDEVHAVGLYGSRGAGIGERDGIMHKIDIISGTLGKAFGCVGGYIASTRDLVDMVRSYAAGFIFTTSLPPMVLSGALESVRLLKGEEGQALRRAHQRNVKHMRQLLMDRGLPVIPCPSHIIPIRVGNAALNSKLCDLLLSKHGIYVQAINYPTVPRGEELLRLAPSPHHSPQMMEDFVEKLLLAWTAVGLPLQDVSVAACNFCRRPVHFELMSEWERSYFGNMGPQYVTTYA</sequence>
<organism>
    <name type="scientific">Homo sapiens</name>
    <name type="common">Human</name>
    <dbReference type="NCBI Taxonomy" id="9606"/>
    <lineage>
        <taxon>Eukaryota</taxon>
        <taxon>Metazoa</taxon>
        <taxon>Chordata</taxon>
        <taxon>Craniata</taxon>
        <taxon>Vertebrata</taxon>
        <taxon>Euteleostomi</taxon>
        <taxon>Mammalia</taxon>
        <taxon>Eutheria</taxon>
        <taxon>Euarchontoglires</taxon>
        <taxon>Primates</taxon>
        <taxon>Haplorrhini</taxon>
        <taxon>Catarrhini</taxon>
        <taxon>Hominidae</taxon>
        <taxon>Homo</taxon>
    </lineage>
</organism>
<comment type="function">
    <text evidence="6 12 13 14 15 16 22">Catalyzes the pyridoxal 5'-phosphate (PLP)-dependent condensation of succinyl-CoA and glycine to form aminolevulinic acid (ALA), with CoA and CO2 as by-products (PubMed:14643893, PubMed:21252495, PubMed:21309041, PubMed:21653323, PubMed:32499479, PubMed:34492704). Contributes significantly to heme formation during erythropoiesis (PubMed:2050125).</text>
</comment>
<comment type="function">
    <molecule>Isoform 3</molecule>
    <text evidence="6">Catalyzes the pyridoxal 5'-phosphate (PLP)-dependent condensation of succinyl-CoA and glycine to form aminolevulinic acid (ALA), with CoA and CO2 as by-products (PubMed:14643893). Catalytic activity is 75-85% of isoform 1 activity (PubMed:14643893).</text>
</comment>
<comment type="function">
    <molecule>Isoform 4</molecule>
    <text evidence="6">Catalyzes the pyridoxal 5'-phosphate (PLP)-dependent condensation of succinyl-CoA and glycine to form aminolevulinic acid (ALA), with CoA and CO2 as by-products (PubMed:14643893). Catalytic activity is 65-75% of isoform 1 activity (PubMed:14643893).</text>
</comment>
<comment type="catalytic activity">
    <reaction evidence="6 12 13 14 15 16">
        <text>succinyl-CoA + glycine + H(+) = 5-aminolevulinate + CO2 + CoA</text>
        <dbReference type="Rhea" id="RHEA:12921"/>
        <dbReference type="ChEBI" id="CHEBI:15378"/>
        <dbReference type="ChEBI" id="CHEBI:16526"/>
        <dbReference type="ChEBI" id="CHEBI:57287"/>
        <dbReference type="ChEBI" id="CHEBI:57292"/>
        <dbReference type="ChEBI" id="CHEBI:57305"/>
        <dbReference type="ChEBI" id="CHEBI:356416"/>
        <dbReference type="EC" id="2.3.1.37"/>
    </reaction>
    <physiologicalReaction direction="left-to-right" evidence="25 26">
        <dbReference type="Rhea" id="RHEA:12922"/>
    </physiologicalReaction>
</comment>
<comment type="catalytic activity">
    <molecule>Isoform 1</molecule>
    <reaction evidence="6">
        <text>succinyl-CoA + glycine + H(+) = 5-aminolevulinate + CO2 + CoA</text>
        <dbReference type="Rhea" id="RHEA:12921"/>
        <dbReference type="ChEBI" id="CHEBI:15378"/>
        <dbReference type="ChEBI" id="CHEBI:16526"/>
        <dbReference type="ChEBI" id="CHEBI:57287"/>
        <dbReference type="ChEBI" id="CHEBI:57292"/>
        <dbReference type="ChEBI" id="CHEBI:57305"/>
        <dbReference type="ChEBI" id="CHEBI:356416"/>
        <dbReference type="EC" id="2.3.1.37"/>
    </reaction>
    <physiologicalReaction direction="left-to-right" evidence="25">
        <dbReference type="Rhea" id="RHEA:12922"/>
    </physiologicalReaction>
</comment>
<comment type="catalytic activity">
    <molecule>Isoform 3</molecule>
    <reaction evidence="6">
        <text>succinyl-CoA + glycine + H(+) = 5-aminolevulinate + CO2 + CoA</text>
        <dbReference type="Rhea" id="RHEA:12921"/>
        <dbReference type="ChEBI" id="CHEBI:15378"/>
        <dbReference type="ChEBI" id="CHEBI:16526"/>
        <dbReference type="ChEBI" id="CHEBI:57287"/>
        <dbReference type="ChEBI" id="CHEBI:57292"/>
        <dbReference type="ChEBI" id="CHEBI:57305"/>
        <dbReference type="ChEBI" id="CHEBI:356416"/>
        <dbReference type="EC" id="2.3.1.37"/>
    </reaction>
    <physiologicalReaction direction="left-to-right" evidence="25">
        <dbReference type="Rhea" id="RHEA:12922"/>
    </physiologicalReaction>
</comment>
<comment type="catalytic activity">
    <molecule>Isoform 4</molecule>
    <reaction evidence="6">
        <text>succinyl-CoA + glycine + H(+) = 5-aminolevulinate + CO2 + CoA</text>
        <dbReference type="Rhea" id="RHEA:12921"/>
        <dbReference type="ChEBI" id="CHEBI:15378"/>
        <dbReference type="ChEBI" id="CHEBI:16526"/>
        <dbReference type="ChEBI" id="CHEBI:57287"/>
        <dbReference type="ChEBI" id="CHEBI:57292"/>
        <dbReference type="ChEBI" id="CHEBI:57305"/>
        <dbReference type="ChEBI" id="CHEBI:356416"/>
        <dbReference type="EC" id="2.3.1.37"/>
    </reaction>
    <physiologicalReaction direction="left-to-right" evidence="25">
        <dbReference type="Rhea" id="RHEA:12922"/>
    </physiologicalReaction>
</comment>
<comment type="cofactor">
    <cofactor evidence="15">
        <name>pyridoxal 5'-phosphate</name>
        <dbReference type="ChEBI" id="CHEBI:597326"/>
    </cofactor>
</comment>
<comment type="activity regulation">
    <text evidence="16">Down-regulated by itaconyl-CoA which acts as a competitive inhibitor of succinyl-CoA substrate.</text>
</comment>
<comment type="biophysicochemical properties">
    <kinetics>
        <KM evidence="15">31 uM for succinyl-CoA</KM>
        <KM evidence="15">11.8 uM for glycine</KM>
        <KM evidence="16">10 uM for succinyl-CoA</KM>
    </kinetics>
</comment>
<comment type="pathway">
    <text evidence="26">Porphyrin-containing compound metabolism; protoporphyrin-IX biosynthesis; 5-aminolevulinate from glycine: step 1/1.</text>
</comment>
<comment type="subunit">
    <text evidence="6 15">Homodimer (PubMed:32499479). Interacts with SUCLA2 (PubMed:14643893, PubMed:32499479).</text>
</comment>
<comment type="subunit">
    <molecule>Isoform 4</molecule>
    <text evidence="6">Interacts with SUCLA2.</text>
</comment>
<comment type="interaction">
    <interactant intactId="EBI-2115743">
        <id>P22557</id>
    </interactant>
    <interactant intactId="EBI-744695">
        <id>Q8N9N5</id>
        <label>BANP</label>
    </interactant>
    <organismsDiffer>false</organismsDiffer>
    <experiments>3</experiments>
</comment>
<comment type="interaction">
    <interactant intactId="EBI-12257000">
        <id>P22557-2</id>
    </interactant>
    <interactant intactId="EBI-11524452">
        <id>Q8N9N5-2</id>
        <label>BANP</label>
    </interactant>
    <organismsDiffer>false</organismsDiffer>
    <experiments>6</experiments>
</comment>
<comment type="subcellular location">
    <subcellularLocation>
        <location evidence="6">Mitochondrion inner membrane</location>
        <topology evidence="24">Peripheral membrane protein</topology>
    </subcellularLocation>
    <text evidence="6">Localizes to the matrix side of the mitochondrion inner membrane.</text>
</comment>
<comment type="subcellular location">
    <molecule>Isoform 4</molecule>
    <subcellularLocation>
        <location evidence="6">Mitochondrion inner membrane</location>
        <topology evidence="24">Peripheral membrane protein</topology>
    </subcellularLocation>
    <text evidence="6">Localizes to the matrix side of the mitochondrion inner membrane.</text>
</comment>
<comment type="alternative products">
    <event type="alternative splicing"/>
    <isoform>
        <id>P22557-1</id>
        <name>1</name>
        <sequence type="displayed"/>
    </isoform>
    <isoform>
        <id>P22557-2</id>
        <name>2</name>
        <name>Delta4</name>
        <sequence type="described" ref="VSP_042852"/>
    </isoform>
    <isoform>
        <id>P22557-3</id>
        <name>3</name>
        <name>F143M</name>
        <sequence type="described" ref="VSP_042851 VSP_042853"/>
    </isoform>
    <isoform>
        <id>P22557-4</id>
        <name>4</name>
        <sequence type="described" ref="VSP_047330 VSP_042852"/>
    </isoform>
</comment>
<comment type="tissue specificity">
    <molecule>Isoform 1</molecule>
    <text evidence="6 11">Erythroid-specific.</text>
</comment>
<comment type="tissue specificity">
    <molecule>Isoform 2</molecule>
    <text evidence="6">Erythroid-specific.</text>
</comment>
<comment type="tissue specificity">
    <molecule>Isoform 3</molecule>
    <text evidence="6">Erythroid-specific.</text>
</comment>
<comment type="tissue specificity">
    <molecule>Isoform 4</molecule>
    <text evidence="6">Erythroid-specific.</text>
</comment>
<comment type="domain">
    <text evidence="15">C-terminus is a mobile self-inhibitory loop which interferes directly with active site.</text>
</comment>
<comment type="disease" evidence="2 3 4 5 7 8 10 12 13 17 18">
    <disease id="DI-00120">
        <name>Anemia, sideroblastic, 1</name>
        <acronym>SIDBA1</acronym>
        <description>A form of sideroblastic anemia that shows a variable hematologic response to pharmacologic doses of pyridoxine. Sideroblastic anemia is characterized by anemia of varying severity, hypochromic peripheral erythrocytes, systemic iron overload secondary to chronic ineffective erythropoiesis, and the presence of bone marrow ringed sideroblasts. Sideroblasts are characterized by iron-loaded mitochondria clustered around the nucleus.</description>
        <dbReference type="MIM" id="300751"/>
    </disease>
    <text>The disease is caused by variants affecting the gene represented in this entry.</text>
</comment>
<comment type="disease" evidence="9">
    <disease id="DI-00485">
        <name>Erythropoietic protoporphyria, X-linked dominant</name>
        <acronym>XLDPT</acronym>
        <description>A form of porphyria. Porphyrias are inherited defects in the biosynthesis of heme, resulting in the accumulation and increased excretion of porphyrins or porphyrin precursors. They are classified as erythropoietic or hepatic, depending on whether the enzyme deficiency occurs in red blood cells or in the liver. XLDPT is characterized biochemically by a high proportion of zinc-protoporphyrin in erythrocytes, in which a mismatch between protoporphyrin production and the heme requirement of differentiating erythroid cells leads to overproduction of protoporphyrin in amounts sufficient to cause photosensitivity and liver disease.</description>
        <dbReference type="MIM" id="300752"/>
    </disease>
    <text evidence="13">The disease is caused by variants affecting the gene represented in this entry. Gain of function mutations in ALS2 are responsible for XLDPT, but they can also be a possible aggravating factor in congenital erythropoietic porphyria and other erythropoietic disorders caused by mutations in other genes (PubMed:21309041).</text>
</comment>
<comment type="similarity">
    <text evidence="24">Belongs to the class-II pyridoxal-phosphate-dependent aminotransferase family.</text>
</comment>
<comment type="sequence caution" evidence="24">
    <conflict type="erroneous initiation">
        <sequence resource="EMBL-CDS" id="CAA39795"/>
    </conflict>
    <text>Truncated N-terminus.</text>
</comment>
<feature type="transit peptide" description="Mitochondrion" evidence="6">
    <location>
        <begin position="1"/>
        <end position="49"/>
    </location>
</feature>
<feature type="chain" id="PRO_0000001223" description="5-aminolevulinate synthase, erythroid-specific, mitochondrial">
    <location>
        <begin position="50"/>
        <end position="587"/>
    </location>
</feature>
<feature type="active site" evidence="1">
    <location>
        <position position="391"/>
    </location>
</feature>
<feature type="binding site" evidence="1">
    <location>
        <position position="163"/>
    </location>
    <ligand>
        <name>succinyl-CoA</name>
        <dbReference type="ChEBI" id="CHEBI:57292"/>
    </ligand>
</feature>
<feature type="binding site" description="in other chain" evidence="15">
    <location>
        <position position="258"/>
    </location>
    <ligand>
        <name>pyridoxal 5'-phosphate</name>
        <dbReference type="ChEBI" id="CHEBI:597326"/>
        <note>ligand shared between dimeric partners</note>
    </ligand>
</feature>
<feature type="binding site" description="in other chain" evidence="15">
    <location>
        <position position="259"/>
    </location>
    <ligand>
        <name>pyridoxal 5'-phosphate</name>
        <dbReference type="ChEBI" id="CHEBI:597326"/>
        <note>ligand shared between dimeric partners</note>
    </ligand>
</feature>
<feature type="binding site" evidence="1">
    <location>
        <position position="280"/>
    </location>
    <ligand>
        <name>succinyl-CoA</name>
        <dbReference type="ChEBI" id="CHEBI:57292"/>
    </ligand>
</feature>
<feature type="binding site" evidence="1">
    <location>
        <position position="299"/>
    </location>
    <ligand>
        <name>succinyl-CoA</name>
        <dbReference type="ChEBI" id="CHEBI:57292"/>
    </ligand>
</feature>
<feature type="binding site" description="in other chain" evidence="1">
    <location>
        <position position="332"/>
    </location>
    <ligand>
        <name>pyridoxal 5'-phosphate</name>
        <dbReference type="ChEBI" id="CHEBI:597326"/>
        <note>ligand shared between dimeric partners</note>
    </ligand>
</feature>
<feature type="binding site" description="in other chain" evidence="15">
    <location>
        <position position="360"/>
    </location>
    <ligand>
        <name>pyridoxal 5'-phosphate</name>
        <dbReference type="ChEBI" id="CHEBI:597326"/>
        <note>ligand shared between dimeric partners</note>
    </ligand>
</feature>
<feature type="binding site" description="in other chain" evidence="15">
    <location>
        <position position="388"/>
    </location>
    <ligand>
        <name>pyridoxal 5'-phosphate</name>
        <dbReference type="ChEBI" id="CHEBI:597326"/>
        <note>ligand shared between dimeric partners</note>
    </ligand>
</feature>
<feature type="binding site" evidence="15">
    <location>
        <position position="420"/>
    </location>
    <ligand>
        <name>pyridoxal 5'-phosphate</name>
        <dbReference type="ChEBI" id="CHEBI:597326"/>
        <note>ligand shared between dimeric partners</note>
    </ligand>
</feature>
<feature type="binding site" evidence="15">
    <location>
        <position position="421"/>
    </location>
    <ligand>
        <name>pyridoxal 5'-phosphate</name>
        <dbReference type="ChEBI" id="CHEBI:597326"/>
        <note>ligand shared between dimeric partners</note>
    </ligand>
</feature>
<feature type="binding site" evidence="1">
    <location>
        <position position="508"/>
    </location>
    <ligand>
        <name>succinyl-CoA</name>
        <dbReference type="ChEBI" id="CHEBI:57292"/>
    </ligand>
</feature>
<feature type="modified residue" description="N6-(pyridoxal phosphate)lysine" evidence="15">
    <location>
        <position position="391"/>
    </location>
</feature>
<feature type="splice variant" id="VSP_042851" description="In isoform 3." evidence="19 24">
    <location>
        <begin position="1"/>
        <end position="142"/>
    </location>
</feature>
<feature type="splice variant" id="VSP_047330" description="In isoform 4." evidence="21">
    <original>M</original>
    <variation>MRGGEVALGWNKKKRLFCEDFRFKM</variation>
    <location>
        <position position="1"/>
    </location>
</feature>
<feature type="splice variant" id="VSP_042852" description="In isoform 2 and isoform 4." evidence="19 20 21">
    <location>
        <begin position="102"/>
        <end position="138"/>
    </location>
</feature>
<feature type="splice variant" id="VSP_042853" description="In isoform 3." evidence="19 24">
    <original>F</original>
    <variation>M</variation>
    <location>
        <position position="143"/>
    </location>
</feature>
<feature type="sequence variant" id="VAR_066232" description="In SIDBA1; significantly reduced activity." evidence="12">
    <original>K</original>
    <variation>E</variation>
    <location>
        <position position="156"/>
    </location>
</feature>
<feature type="sequence variant" id="VAR_018604" description="In SIDBA1; dbSNP:rs137852308." evidence="4">
    <original>D</original>
    <variation>Y</variation>
    <location>
        <position position="159"/>
    </location>
</feature>
<feature type="sequence variant" id="VAR_072328" description="In SIDBA1; dbSNP:rs137852301." evidence="10">
    <original>F</original>
    <variation>L</variation>
    <location>
        <position position="165"/>
    </location>
</feature>
<feature type="sequence variant" id="VAR_072329" description="In SIDBA1; dbSNP:rs1557248142." evidence="10">
    <original>R</original>
    <variation>C</variation>
    <location>
        <position position="170"/>
    </location>
</feature>
<feature type="sequence variant" id="VAR_066233" description="In SIDBA1; significantly increased thermosensitivity." evidence="13">
    <original>R</original>
    <variation>H</variation>
    <location>
        <position position="170"/>
    </location>
</feature>
<feature type="sequence variant" id="VAR_012334" description="In SIDBA1; dbSNP:rs137852310." evidence="2">
    <original>Y</original>
    <variation>H</variation>
    <location>
        <position position="199"/>
    </location>
</feature>
<feature type="sequence variant" id="VAR_012335" description="In SIDBA1; 15% to 35% activity of wild-type; dbSNP:rs1338391423." evidence="3">
    <original>R</original>
    <variation>Q</variation>
    <location>
        <position position="204"/>
    </location>
</feature>
<feature type="sequence variant" id="VAR_066234" description="In SIDBA1; significantly increased thermosensitivity; dbSNP:rs185504937." evidence="13">
    <original>R</original>
    <variation>H</variation>
    <location>
        <position position="218"/>
    </location>
</feature>
<feature type="sequence variant" id="VAR_066235" description="In SIDBA1; significantly reduced activity." evidence="13">
    <original>E</original>
    <variation>K</variation>
    <location>
        <position position="242"/>
    </location>
</feature>
<feature type="sequence variant" id="VAR_066236" description="In SIDBA1; significantly reduced activity." evidence="13">
    <original>D</original>
    <variation>N</variation>
    <location>
        <position position="263"/>
    </location>
</feature>
<feature type="sequence variant" id="VAR_072330" description="In SIDBA1." evidence="10">
    <original>V</original>
    <variation>A</variation>
    <location>
        <position position="301"/>
    </location>
</feature>
<feature type="sequence variant" id="VAR_066237" description="In SIDBA1; significantly reduced activity." evidence="13">
    <original>P</original>
    <variation>L</variation>
    <location>
        <position position="339"/>
    </location>
</feature>
<feature type="sequence variant" id="VAR_066238" description="In SIDBA1; significantly reduced activity." evidence="13">
    <original>R</original>
    <variation>C</variation>
    <location>
        <position position="375"/>
    </location>
</feature>
<feature type="sequence variant" id="VAR_000562" description="In SIDBA1; dbSNP:rs137852300." evidence="17">
    <original>T</original>
    <variation>S</variation>
    <location>
        <position position="388"/>
    </location>
</feature>
<feature type="sequence variant" id="VAR_000563" description="In SIDBA1; 12% to 25% activity of wild-type; dbSNP:rs137852305." evidence="2 10 18">
    <original>R</original>
    <variation>C</variation>
    <location>
        <position position="411"/>
    </location>
</feature>
<feature type="sequence variant" id="VAR_066239" description="In SIDBA1; significantly reduced activity." evidence="13">
    <original>R</original>
    <variation>H</variation>
    <location>
        <position position="411"/>
    </location>
</feature>
<feature type="sequence variant" id="VAR_012336" description="In SIDBA1." evidence="2">
    <original>R</original>
    <variation>Q</variation>
    <location>
        <position position="448"/>
    </location>
</feature>
<feature type="sequence variant" id="VAR_012337" description="In SIDBA1; dbSNP:rs137852311." evidence="2 12">
    <original>R</original>
    <variation>C</variation>
    <location>
        <position position="452"/>
    </location>
</feature>
<feature type="sequence variant" id="VAR_066240" description="In SIDBA1; does not affect activity." evidence="10 13">
    <original>R</original>
    <variation>G</variation>
    <location>
        <position position="452"/>
    </location>
</feature>
<feature type="sequence variant" id="VAR_066241" description="In SIDBA1; dbSNP:rs863223904." evidence="12">
    <original>R</original>
    <variation>H</variation>
    <location>
        <position position="452"/>
    </location>
</feature>
<feature type="sequence variant" id="VAR_000564" description="In SIDBA1; dbSNP:rs137852299." evidence="7">
    <original>I</original>
    <variation>N</variation>
    <location>
        <position position="476"/>
    </location>
</feature>
<feature type="sequence variant" id="VAR_072331" description="In SIDBA1." evidence="10">
    <original>R</original>
    <variation>G</variation>
    <location>
        <position position="517"/>
    </location>
</feature>
<feature type="sequence variant" id="VAR_066242" description="In SIDBA1; likely benign; associated in cis with H-560 in a patient; dbSNP:rs201062903." evidence="8 10 13">
    <original>P</original>
    <variation>L</variation>
    <location>
        <position position="520"/>
    </location>
</feature>
<feature type="sequence variant" id="VAR_018605" description="In SIDBA1; associated in cis with L-520 in a patient; dbSNP:rs892041887." evidence="5 8">
    <original>R</original>
    <variation>H</variation>
    <location>
        <position position="560"/>
    </location>
</feature>
<feature type="sequence variant" id="VAR_066243" description="In SIDBA1; does not affect activity." evidence="13">
    <original>R</original>
    <variation>H</variation>
    <location>
        <position position="572"/>
    </location>
</feature>
<feature type="sequence variant" id="VAR_066244" description="Rare variant found in a congenital erythropoietic porphyria patient that also carries UROS mutations R-73 and Q-248; increased enzyme activity; dbSNP:rs139596860." evidence="14">
    <original>Y</original>
    <variation>F</variation>
    <location>
        <position position="586"/>
    </location>
</feature>
<feature type="mutagenesis site" description="2-fold increased enzyme activity with a lower specificity for glycine and higher for succinyl-CoA." evidence="15">
    <original>R</original>
    <variation>E</variation>
    <location>
        <position position="511"/>
    </location>
</feature>
<feature type="sequence conflict" description="In Ref. 1; CAA39795." evidence="24" ref="1">
    <original>S</original>
    <variation>F</variation>
    <location>
        <position position="182"/>
    </location>
</feature>
<feature type="sequence conflict" description="In Ref. 7; AAH30230." evidence="24" ref="7">
    <original>A</original>
    <variation>V</variation>
    <location>
        <position position="221"/>
    </location>
</feature>
<feature type="helix" evidence="29">
    <location>
        <begin position="145"/>
        <end position="158"/>
    </location>
</feature>
<feature type="strand" evidence="29">
    <location>
        <begin position="167"/>
        <end position="170"/>
    </location>
</feature>
<feature type="helix" evidence="29">
    <location>
        <begin position="172"/>
        <end position="174"/>
    </location>
</feature>
<feature type="strand" evidence="29">
    <location>
        <begin position="177"/>
        <end position="181"/>
    </location>
</feature>
<feature type="strand" evidence="29">
    <location>
        <begin position="189"/>
        <end position="195"/>
    </location>
</feature>
<feature type="helix" evidence="29">
    <location>
        <begin position="202"/>
        <end position="204"/>
    </location>
</feature>
<feature type="helix" evidence="29">
    <location>
        <begin position="206"/>
        <end position="219"/>
    </location>
</feature>
<feature type="turn" evidence="29">
    <location>
        <begin position="227"/>
        <end position="230"/>
    </location>
</feature>
<feature type="helix" evidence="29">
    <location>
        <begin position="234"/>
        <end position="246"/>
    </location>
</feature>
<feature type="strand" evidence="29">
    <location>
        <begin position="250"/>
        <end position="256"/>
    </location>
</feature>
<feature type="helix" evidence="29">
    <location>
        <begin position="258"/>
        <end position="272"/>
    </location>
</feature>
<feature type="strand" evidence="29">
    <location>
        <begin position="277"/>
        <end position="281"/>
    </location>
</feature>
<feature type="helix" evidence="29">
    <location>
        <begin position="286"/>
        <end position="295"/>
    </location>
</feature>
<feature type="strand" evidence="29">
    <location>
        <begin position="298"/>
        <end position="302"/>
    </location>
</feature>
<feature type="helix" evidence="29">
    <location>
        <begin position="307"/>
        <end position="315"/>
    </location>
</feature>
<feature type="strand" evidence="29">
    <location>
        <begin position="323"/>
        <end position="330"/>
    </location>
</feature>
<feature type="turn" evidence="29">
    <location>
        <begin position="332"/>
        <end position="334"/>
    </location>
</feature>
<feature type="helix" evidence="29">
    <location>
        <begin position="340"/>
        <end position="349"/>
    </location>
</feature>
<feature type="strand" evidence="29">
    <location>
        <begin position="353"/>
        <end position="357"/>
    </location>
</feature>
<feature type="turn" evidence="29">
    <location>
        <begin position="359"/>
        <end position="364"/>
    </location>
</feature>
<feature type="helix" evidence="29">
    <location>
        <begin position="372"/>
        <end position="375"/>
    </location>
</feature>
<feature type="helix" evidence="29">
    <location>
        <begin position="379"/>
        <end position="381"/>
    </location>
</feature>
<feature type="strand" evidence="29">
    <location>
        <begin position="383"/>
        <end position="391"/>
    </location>
</feature>
<feature type="strand" evidence="29">
    <location>
        <begin position="398"/>
        <end position="402"/>
    </location>
</feature>
<feature type="helix" evidence="29">
    <location>
        <begin position="404"/>
        <end position="413"/>
    </location>
</feature>
<feature type="helix" evidence="29">
    <location>
        <begin position="415"/>
        <end position="418"/>
    </location>
</feature>
<feature type="strand" evidence="29">
    <location>
        <begin position="419"/>
        <end position="421"/>
    </location>
</feature>
<feature type="helix" evidence="29">
    <location>
        <begin position="425"/>
        <end position="439"/>
    </location>
</feature>
<feature type="helix" evidence="29">
    <location>
        <begin position="441"/>
        <end position="463"/>
    </location>
</feature>
<feature type="strand" evidence="29">
    <location>
        <begin position="472"/>
        <end position="474"/>
    </location>
</feature>
<feature type="strand" evidence="29">
    <location>
        <begin position="476"/>
        <end position="479"/>
    </location>
</feature>
<feature type="helix" evidence="29">
    <location>
        <begin position="483"/>
        <end position="497"/>
    </location>
</feature>
<feature type="strand" evidence="29">
    <location>
        <begin position="498"/>
        <end position="500"/>
    </location>
</feature>
<feature type="turn" evidence="29">
    <location>
        <begin position="506"/>
        <end position="508"/>
    </location>
</feature>
<feature type="strand" evidence="29">
    <location>
        <begin position="515"/>
        <end position="518"/>
    </location>
</feature>
<feature type="helix" evidence="29">
    <location>
        <begin position="526"/>
        <end position="542"/>
    </location>
</feature>
<feature type="helix" evidence="29">
    <location>
        <begin position="569"/>
        <end position="575"/>
    </location>
</feature>
<gene>
    <name evidence="23 27" type="primary">ALAS2</name>
    <name type="synonym">ALASE</name>
    <name type="synonym">ASB</name>
</gene>